<reference key="1">
    <citation type="journal article" date="1998" name="Genomics">
        <title>The quiescin Q6 gene (QSCN6) is a fusion of two ancient gene families: thioredoxin and ERV1.</title>
        <authorList>
            <person name="Coppock D.L."/>
            <person name="Cina-Poppe D."/>
            <person name="Gilleran S."/>
        </authorList>
    </citation>
    <scope>NUCLEOTIDE SEQUENCE [MRNA] (ISOFORM 1)</scope>
    <scope>INDUCTION</scope>
    <source>
        <tissue>Lung</tissue>
    </source>
</reference>
<reference key="2">
    <citation type="journal article" date="2006" name="Biochim. Biophys. Acta">
        <title>Identification and expression of a new splicing variant of FAD-sulfhydryl oxidase in adult rat brain.</title>
        <authorList>
            <person name="Radom J."/>
            <person name="Colin D."/>
            <person name="Thiebault F."/>
            <person name="Dognin-Bergeret M.J."/>
            <person name="Mairet-Coello G."/>
            <person name="Esnard-Feve A."/>
            <person name="Fellmann D."/>
            <person name="Jouvenot M."/>
        </authorList>
    </citation>
    <scope>NUCLEOTIDE SEQUENCE [MRNA] (ISOFORM 2)</scope>
    <scope>VARIANTS ALA-200 AND ARG-444</scope>
    <source>
        <tissue>Placenta</tissue>
    </source>
</reference>
<reference key="3">
    <citation type="journal article" date="2003" name="Genome Res.">
        <title>The secreted protein discovery initiative (SPDI), a large-scale effort to identify novel human secreted and transmembrane proteins: a bioinformatics assessment.</title>
        <authorList>
            <person name="Clark H.F."/>
            <person name="Gurney A.L."/>
            <person name="Abaya E."/>
            <person name="Baker K."/>
            <person name="Baldwin D.T."/>
            <person name="Brush J."/>
            <person name="Chen J."/>
            <person name="Chow B."/>
            <person name="Chui C."/>
            <person name="Crowley C."/>
            <person name="Currell B."/>
            <person name="Deuel B."/>
            <person name="Dowd P."/>
            <person name="Eaton D."/>
            <person name="Foster J.S."/>
            <person name="Grimaldi C."/>
            <person name="Gu Q."/>
            <person name="Hass P.E."/>
            <person name="Heldens S."/>
            <person name="Huang A."/>
            <person name="Kim H.S."/>
            <person name="Klimowski L."/>
            <person name="Jin Y."/>
            <person name="Johnson S."/>
            <person name="Lee J."/>
            <person name="Lewis L."/>
            <person name="Liao D."/>
            <person name="Mark M.R."/>
            <person name="Robbie E."/>
            <person name="Sanchez C."/>
            <person name="Schoenfeld J."/>
            <person name="Seshagiri S."/>
            <person name="Simmons L."/>
            <person name="Singh J."/>
            <person name="Smith V."/>
            <person name="Stinson J."/>
            <person name="Vagts A."/>
            <person name="Vandlen R.L."/>
            <person name="Watanabe C."/>
            <person name="Wieand D."/>
            <person name="Woods K."/>
            <person name="Xie M.-H."/>
            <person name="Yansura D.G."/>
            <person name="Yi S."/>
            <person name="Yu G."/>
            <person name="Yuan J."/>
            <person name="Zhang M."/>
            <person name="Zhang Z."/>
            <person name="Goddard A.D."/>
            <person name="Wood W.I."/>
            <person name="Godowski P.J."/>
            <person name="Gray A.M."/>
        </authorList>
    </citation>
    <scope>NUCLEOTIDE SEQUENCE [LARGE SCALE MRNA] (ISOFORM 1)</scope>
</reference>
<reference key="4">
    <citation type="submission" date="2005-03" db="EMBL/GenBank/DDBJ databases">
        <authorList>
            <person name="Totoki Y."/>
            <person name="Toyoda A."/>
            <person name="Takeda T."/>
            <person name="Sakaki Y."/>
            <person name="Tanaka A."/>
            <person name="Yokoyama S."/>
            <person name="Ohara O."/>
            <person name="Nagase T."/>
            <person name="Kikuno R.F."/>
        </authorList>
    </citation>
    <scope>NUCLEOTIDE SEQUENCE [LARGE SCALE MRNA] (ISOFORM 1)</scope>
    <scope>VARIANT ALA-200</scope>
    <source>
        <tissue>Brain</tissue>
    </source>
</reference>
<reference key="5">
    <citation type="journal article" date="2006" name="Nature">
        <title>The DNA sequence and biological annotation of human chromosome 1.</title>
        <authorList>
            <person name="Gregory S.G."/>
            <person name="Barlow K.F."/>
            <person name="McLay K.E."/>
            <person name="Kaul R."/>
            <person name="Swarbreck D."/>
            <person name="Dunham A."/>
            <person name="Scott C.E."/>
            <person name="Howe K.L."/>
            <person name="Woodfine K."/>
            <person name="Spencer C.C.A."/>
            <person name="Jones M.C."/>
            <person name="Gillson C."/>
            <person name="Searle S."/>
            <person name="Zhou Y."/>
            <person name="Kokocinski F."/>
            <person name="McDonald L."/>
            <person name="Evans R."/>
            <person name="Phillips K."/>
            <person name="Atkinson A."/>
            <person name="Cooper R."/>
            <person name="Jones C."/>
            <person name="Hall R.E."/>
            <person name="Andrews T.D."/>
            <person name="Lloyd C."/>
            <person name="Ainscough R."/>
            <person name="Almeida J.P."/>
            <person name="Ambrose K.D."/>
            <person name="Anderson F."/>
            <person name="Andrew R.W."/>
            <person name="Ashwell R.I.S."/>
            <person name="Aubin K."/>
            <person name="Babbage A.K."/>
            <person name="Bagguley C.L."/>
            <person name="Bailey J."/>
            <person name="Beasley H."/>
            <person name="Bethel G."/>
            <person name="Bird C.P."/>
            <person name="Bray-Allen S."/>
            <person name="Brown J.Y."/>
            <person name="Brown A.J."/>
            <person name="Buckley D."/>
            <person name="Burton J."/>
            <person name="Bye J."/>
            <person name="Carder C."/>
            <person name="Chapman J.C."/>
            <person name="Clark S.Y."/>
            <person name="Clarke G."/>
            <person name="Clee C."/>
            <person name="Cobley V."/>
            <person name="Collier R.E."/>
            <person name="Corby N."/>
            <person name="Coville G.J."/>
            <person name="Davies J."/>
            <person name="Deadman R."/>
            <person name="Dunn M."/>
            <person name="Earthrowl M."/>
            <person name="Ellington A.G."/>
            <person name="Errington H."/>
            <person name="Frankish A."/>
            <person name="Frankland J."/>
            <person name="French L."/>
            <person name="Garner P."/>
            <person name="Garnett J."/>
            <person name="Gay L."/>
            <person name="Ghori M.R.J."/>
            <person name="Gibson R."/>
            <person name="Gilby L.M."/>
            <person name="Gillett W."/>
            <person name="Glithero R.J."/>
            <person name="Grafham D.V."/>
            <person name="Griffiths C."/>
            <person name="Griffiths-Jones S."/>
            <person name="Grocock R."/>
            <person name="Hammond S."/>
            <person name="Harrison E.S.I."/>
            <person name="Hart E."/>
            <person name="Haugen E."/>
            <person name="Heath P.D."/>
            <person name="Holmes S."/>
            <person name="Holt K."/>
            <person name="Howden P.J."/>
            <person name="Hunt A.R."/>
            <person name="Hunt S.E."/>
            <person name="Hunter G."/>
            <person name="Isherwood J."/>
            <person name="James R."/>
            <person name="Johnson C."/>
            <person name="Johnson D."/>
            <person name="Joy A."/>
            <person name="Kay M."/>
            <person name="Kershaw J.K."/>
            <person name="Kibukawa M."/>
            <person name="Kimberley A.M."/>
            <person name="King A."/>
            <person name="Knights A.J."/>
            <person name="Lad H."/>
            <person name="Laird G."/>
            <person name="Lawlor S."/>
            <person name="Leongamornlert D.A."/>
            <person name="Lloyd D.M."/>
            <person name="Loveland J."/>
            <person name="Lovell J."/>
            <person name="Lush M.J."/>
            <person name="Lyne R."/>
            <person name="Martin S."/>
            <person name="Mashreghi-Mohammadi M."/>
            <person name="Matthews L."/>
            <person name="Matthews N.S.W."/>
            <person name="McLaren S."/>
            <person name="Milne S."/>
            <person name="Mistry S."/>
            <person name="Moore M.J.F."/>
            <person name="Nickerson T."/>
            <person name="O'Dell C.N."/>
            <person name="Oliver K."/>
            <person name="Palmeiri A."/>
            <person name="Palmer S.A."/>
            <person name="Parker A."/>
            <person name="Patel D."/>
            <person name="Pearce A.V."/>
            <person name="Peck A.I."/>
            <person name="Pelan S."/>
            <person name="Phelps K."/>
            <person name="Phillimore B.J."/>
            <person name="Plumb R."/>
            <person name="Rajan J."/>
            <person name="Raymond C."/>
            <person name="Rouse G."/>
            <person name="Saenphimmachak C."/>
            <person name="Sehra H.K."/>
            <person name="Sheridan E."/>
            <person name="Shownkeen R."/>
            <person name="Sims S."/>
            <person name="Skuce C.D."/>
            <person name="Smith M."/>
            <person name="Steward C."/>
            <person name="Subramanian S."/>
            <person name="Sycamore N."/>
            <person name="Tracey A."/>
            <person name="Tromans A."/>
            <person name="Van Helmond Z."/>
            <person name="Wall M."/>
            <person name="Wallis J.M."/>
            <person name="White S."/>
            <person name="Whitehead S.L."/>
            <person name="Wilkinson J.E."/>
            <person name="Willey D.L."/>
            <person name="Williams H."/>
            <person name="Wilming L."/>
            <person name="Wray P.W."/>
            <person name="Wu Z."/>
            <person name="Coulson A."/>
            <person name="Vaudin M."/>
            <person name="Sulston J.E."/>
            <person name="Durbin R.M."/>
            <person name="Hubbard T."/>
            <person name="Wooster R."/>
            <person name="Dunham I."/>
            <person name="Carter N.P."/>
            <person name="McVean G."/>
            <person name="Ross M.T."/>
            <person name="Harrow J."/>
            <person name="Olson M.V."/>
            <person name="Beck S."/>
            <person name="Rogers J."/>
            <person name="Bentley D.R."/>
        </authorList>
    </citation>
    <scope>NUCLEOTIDE SEQUENCE [LARGE SCALE GENOMIC DNA]</scope>
</reference>
<reference key="6">
    <citation type="journal article" date="2004" name="Genome Res.">
        <title>The status, quality, and expansion of the NIH full-length cDNA project: the Mammalian Gene Collection (MGC).</title>
        <authorList>
            <consortium name="The MGC Project Team"/>
        </authorList>
    </citation>
    <scope>NUCLEOTIDE SEQUENCE [LARGE SCALE MRNA] (ISOFORMS 1 AND 2)</scope>
    <scope>VARIANT ALA-200</scope>
    <source>
        <tissue>Chondrosarcoma</tissue>
        <tissue>Kidney</tissue>
    </source>
</reference>
<reference key="7">
    <citation type="journal article" date="2000" name="Biochem. Biophys. Res. Commun.">
        <title>Regulation of the quiescence-induced genes: quiescin Q6, decorin, and ribosomal protein S29.</title>
        <authorList>
            <person name="Coppock D.L."/>
            <person name="Kopman C."/>
            <person name="Gudas J."/>
            <person name="Cina-Poppe D.A."/>
        </authorList>
    </citation>
    <scope>INDUCTION</scope>
    <scope>SUBCELLULAR LOCATION</scope>
    <scope>TISSUE SPECIFICITY</scope>
</reference>
<reference key="8">
    <citation type="journal article" date="2001" name="Proc. Annu. Meet. Am. Assoc. Cancer Res.">
        <title>The distribution and specificity of expression of quiescin Q6 (Q6) in Human tissues is associated with both endocrine and non-endocrine protein secretion.</title>
        <authorList>
            <person name="Turi G.K."/>
        </authorList>
    </citation>
    <scope>TISSUE SPECIFICITY</scope>
</reference>
<reference key="9">
    <citation type="journal article" date="2002" name="Arch. Biochem. Biophys.">
        <title>Sulfhydryl oxidases: emerging catalysts of protein disulfide bond formation in eukaryotes.</title>
        <authorList>
            <person name="Thorpe C."/>
            <person name="Hoober K.L."/>
            <person name="Raje S."/>
            <person name="Glynn N.M."/>
            <person name="Burnside J."/>
            <person name="Turi G.K."/>
            <person name="Coppock D.L."/>
        </authorList>
    </citation>
    <scope>REVIEW</scope>
    <scope>NOMENCLATURE</scope>
</reference>
<reference key="10">
    <citation type="journal article" date="2005" name="J. Proteome Res.">
        <title>Human plasma N-glycoproteome analysis by immunoaffinity subtraction, hydrazide chemistry, and mass spectrometry.</title>
        <authorList>
            <person name="Liu T."/>
            <person name="Qian W.-J."/>
            <person name="Gritsenko M.A."/>
            <person name="Camp D.G. II"/>
            <person name="Monroe M.E."/>
            <person name="Moore R.J."/>
            <person name="Smith R.D."/>
        </authorList>
    </citation>
    <scope>GLYCOSYLATION [LARGE SCALE ANALYSIS] AT ASN-130</scope>
    <source>
        <tissue>Plasma</tissue>
    </source>
</reference>
<reference key="11">
    <citation type="journal article" date="2007" name="Biochem. J.">
        <title>Intracellular catalysis of disulfide bond formation by the human sulfhydryl oxidase, QSOX1.</title>
        <authorList>
            <person name="Chakravarthi S."/>
            <person name="Jessop C.E."/>
            <person name="Willer M."/>
            <person name="Stirling C.J."/>
            <person name="Bulleid N.J."/>
        </authorList>
    </citation>
    <scope>FUNCTION</scope>
    <scope>SUBCELLULAR LOCATION</scope>
    <scope>TOPOLOGY</scope>
    <scope>GLYCOSYLATION</scope>
</reference>
<reference key="12">
    <citation type="journal article" date="2008" name="Biochemistry">
        <title>Human quiescin-sulfhydryl oxidase, QSOX1: probing internal redox steps by mutagenesis.</title>
        <authorList>
            <person name="Heckler E.J."/>
            <person name="Alon A."/>
            <person name="Fass D."/>
            <person name="Thorpe C."/>
        </authorList>
    </citation>
    <scope>FUNCTION</scope>
    <scope>CATALYTIC ACTIVITY</scope>
    <scope>SUBUNIT</scope>
    <scope>COFACTOR</scope>
    <scope>MUTAGENESIS OF CYS-70; CYS-73; CYS-449; CYS-452; CYS-509 AND CYS-512</scope>
    <scope>ACTIVE SITE</scope>
</reference>
<reference key="13">
    <citation type="journal article" date="2009" name="Mol. Cell. Proteomics">
        <title>A strategy for precise and large scale identification of core fucosylated glycoproteins.</title>
        <authorList>
            <person name="Jia W."/>
            <person name="Lu Z."/>
            <person name="Fu Y."/>
            <person name="Wang H.P."/>
            <person name="Wang L.H."/>
            <person name="Chi H."/>
            <person name="Yuan Z.F."/>
            <person name="Zheng Z.B."/>
            <person name="Song L.N."/>
            <person name="Han H.H."/>
            <person name="Liang Y.M."/>
            <person name="Wang J.L."/>
            <person name="Cai Y."/>
            <person name="Zhang Y.K."/>
            <person name="Deng Y.L."/>
            <person name="Ying W.T."/>
            <person name="He S.M."/>
            <person name="Qian X.H."/>
        </authorList>
    </citation>
    <scope>GLYCOSYLATION AT ASN-130</scope>
</reference>
<reference key="14">
    <citation type="journal article" date="2015" name="Cell">
        <title>A single kinase generates the majority of the secreted phosphoproteome.</title>
        <authorList>
            <person name="Tagliabracci V.S."/>
            <person name="Wiley S.E."/>
            <person name="Guo X."/>
            <person name="Kinch L.N."/>
            <person name="Durrant E."/>
            <person name="Wen J."/>
            <person name="Xiao J."/>
            <person name="Cui J."/>
            <person name="Nguyen K.B."/>
            <person name="Engel J.L."/>
            <person name="Coon J.J."/>
            <person name="Grishin N."/>
            <person name="Pinna L.A."/>
            <person name="Pagliarini D.J."/>
            <person name="Dixon J.E."/>
        </authorList>
    </citation>
    <scope>PHOSPHORYLATION AT SER-426</scope>
</reference>
<reference key="15">
    <citation type="journal article" date="2013" name="Science">
        <title>A secreted disulfide catalyst controls extracellular matrix composition and function.</title>
        <authorList>
            <person name="Ilani T."/>
            <person name="Alon A."/>
            <person name="Grossman I."/>
            <person name="Horowitz B."/>
            <person name="Kartvelishvily E."/>
            <person name="Cohen S.R."/>
            <person name="Fass D."/>
        </authorList>
    </citation>
    <scope>FUNCTION</scope>
    <scope>CATALYTIC ACTIVITY</scope>
    <scope>SUBCELLULAR LOCATION</scope>
    <scope>IDENTIFICATION BY MASS SPECTROMETRY</scope>
    <scope>ALTERNATIVE SPLICING</scope>
    <scope>MUTAGENESIS OF 70-CYS--CYS-73</scope>
    <scope>ACTIVE SITE</scope>
</reference>
<reference key="16">
    <citation type="journal article" date="2015" name="Proteomics">
        <title>N-terminome analysis of the human mitochondrial proteome.</title>
        <authorList>
            <person name="Vaca Jacome A.S."/>
            <person name="Rabilloud T."/>
            <person name="Schaeffer-Reiss C."/>
            <person name="Rompais M."/>
            <person name="Ayoub D."/>
            <person name="Lane L."/>
            <person name="Bairoch A."/>
            <person name="Van Dorsselaer A."/>
            <person name="Carapito C."/>
        </authorList>
    </citation>
    <scope>IDENTIFICATION BY MASS SPECTROMETRY [LARGE SCALE ANALYSIS]</scope>
</reference>
<reference key="17">
    <citation type="journal article" date="2016" name="Protein Eng. Des. Sel.">
        <title>Overcoming a species-specificity barrier in development of an inhibitory antibody targeting a modulator of tumor stroma.</title>
        <authorList>
            <person name="Grossman I."/>
            <person name="Ilani T."/>
            <person name="Fleishman S.J."/>
            <person name="Fass D."/>
        </authorList>
    </citation>
    <scope>CATALYTIC ACTIVITY</scope>
</reference>
<reference key="18">
    <citation type="journal article" date="2018" name="Glycobiology">
        <title>Quiescin sulfhydryl oxidase 1 (QSOX1) glycosite mutation perturbs secretion but not Golgi localization.</title>
        <authorList>
            <person name="Horowitz B."/>
            <person name="Javitt G."/>
            <person name="Ilani T."/>
            <person name="Gat Y."/>
            <person name="Morgenstern D."/>
            <person name="Bard F.A."/>
            <person name="Fass D."/>
        </authorList>
    </citation>
    <scope>SUBCELLULAR LOCATION</scope>
    <scope>CATALYTIC ACTIVITY</scope>
    <scope>GLYCOSYLATION AT ASN-130 AND ASN-243</scope>
    <scope>IDENTIFICATION BY MASS SPECTROMETRY</scope>
    <scope>MUTAGENESIS OF ASN-130; ASN-243 AND 276-THR--THR-282</scope>
</reference>
<reference key="19">
    <citation type="journal article" date="2019" name="Protein Sci.">
        <title>cis-Proline mutants of quiescin sulfhydryl oxidase 1 with altered redox properties undermine extracellular matrix integrity and cell adhesion in fibroblast cultures.</title>
        <authorList>
            <person name="Javitt G."/>
            <person name="Grossman-Haham I."/>
            <person name="Alon A."/>
            <person name="Resnick E."/>
            <person name="Mutsafi Y."/>
            <person name="Ilani T."/>
            <person name="Fass D."/>
        </authorList>
    </citation>
    <scope>FUNCTION</scope>
    <scope>CATALYTIC ACTIVITY</scope>
    <scope>MUTAGENESIS OF 70-CYS--CYS-73; HIS-72 AND PRO-119</scope>
    <scope>ACTIVE SITE</scope>
</reference>
<reference key="20">
    <citation type="journal article" date="2010" name="FEBS Lett.">
        <title>QSOX contains a pseudo-dimer of functional and degenerate sulfhydryl oxidase domains.</title>
        <authorList>
            <person name="Alon A."/>
            <person name="Heckler E.J."/>
            <person name="Thorpe C."/>
            <person name="Fass D."/>
        </authorList>
    </citation>
    <scope>X-RAY CRYSTALLOGRAPHY (2.0 ANGSTROMS) OF 286-546 IN COMPLEX WITH FAD</scope>
    <scope>SUBUNIT</scope>
    <scope>COFACTOR</scope>
    <scope>DISULFIDE BONDS</scope>
</reference>
<reference evidence="38" key="21">
    <citation type="journal article" date="2012" name="Nature">
        <title>The dynamic disulphide relay of quiescin sulphydryl oxidase.</title>
        <authorList>
            <person name="Alon A."/>
            <person name="Grossman I."/>
            <person name="Gat Y."/>
            <person name="Kodali V.K."/>
            <person name="DiMaio F."/>
            <person name="Mehlman T."/>
            <person name="Haran G."/>
            <person name="Baker D."/>
            <person name="Thorpe C."/>
            <person name="Fass D."/>
        </authorList>
    </citation>
    <scope>X-RAY CRYSTALLOGRAPHY (2.05 ANGSTROMS) OF 33-272</scope>
    <scope>CATALYTIC ACTIVITY</scope>
    <scope>DISULFIDE BONDS</scope>
</reference>
<reference evidence="39" key="22">
    <citation type="journal article" date="2013" name="J. Mol. Biol.">
        <title>An inhibitory antibody blocks the first step in the dithiol/disulfide relay mechanism of the enzyme QSOX1.</title>
        <authorList>
            <person name="Grossman I."/>
            <person name="Alon A."/>
            <person name="Ilani T."/>
            <person name="Fass D."/>
        </authorList>
    </citation>
    <scope>X-RAY CRYSTALLOGRAPHY (2.70 ANGSTROMS) OF 33-272 IN COMPLEX WITH INHIBITORY ANTIBODY</scope>
    <scope>FUNCTION</scope>
    <scope>CATALYTIC ACTIVITY</scope>
    <scope>DISULFIDE BONDS</scope>
</reference>
<feature type="signal peptide" evidence="1">
    <location>
        <begin position="1"/>
        <end position="29"/>
    </location>
</feature>
<feature type="chain" id="PRO_0000249533" description="Sulfhydryl oxidase 1">
    <location>
        <begin position="30"/>
        <end position="747"/>
    </location>
</feature>
<feature type="transmembrane region" description="Helical" evidence="1">
    <location>
        <begin position="710"/>
        <end position="730"/>
    </location>
</feature>
<feature type="domain" description="Thioredoxin" evidence="3">
    <location>
        <begin position="36"/>
        <end position="156"/>
    </location>
</feature>
<feature type="domain" description="ERV/ALR sulfhydryl oxidase" evidence="2">
    <location>
        <begin position="396"/>
        <end position="503"/>
    </location>
</feature>
<feature type="region of interest" description="Disordered" evidence="4">
    <location>
        <begin position="573"/>
        <end position="633"/>
    </location>
</feature>
<feature type="compositionally biased region" description="Basic and acidic residues" evidence="4">
    <location>
        <begin position="621"/>
        <end position="633"/>
    </location>
</feature>
<feature type="active site" description="Nucleophile" evidence="31 35">
    <location>
        <position position="70"/>
    </location>
</feature>
<feature type="active site" description="Nucleophile" evidence="31 35">
    <location>
        <position position="73"/>
    </location>
</feature>
<feature type="binding site" evidence="12 36 37">
    <location>
        <position position="401"/>
    </location>
    <ligand>
        <name>FAD</name>
        <dbReference type="ChEBI" id="CHEBI:57692"/>
    </ligand>
</feature>
<feature type="binding site" evidence="12 36 37">
    <location>
        <position position="408"/>
    </location>
    <ligand>
        <name>FAD</name>
        <dbReference type="ChEBI" id="CHEBI:57692"/>
    </ligand>
</feature>
<feature type="binding site" evidence="12 36 37">
    <location>
        <position position="412"/>
    </location>
    <ligand>
        <name>FAD</name>
        <dbReference type="ChEBI" id="CHEBI:57692"/>
    </ligand>
</feature>
<feature type="binding site" evidence="12 36 37">
    <location>
        <position position="451"/>
    </location>
    <ligand>
        <name>FAD</name>
        <dbReference type="ChEBI" id="CHEBI:57692"/>
    </ligand>
</feature>
<feature type="binding site" evidence="12 36 37">
    <location>
        <position position="455"/>
    </location>
    <ligand>
        <name>FAD</name>
        <dbReference type="ChEBI" id="CHEBI:57692"/>
    </ligand>
</feature>
<feature type="binding site" evidence="12 36 37">
    <location>
        <begin position="478"/>
        <end position="485"/>
    </location>
    <ligand>
        <name>FAD</name>
        <dbReference type="ChEBI" id="CHEBI:57692"/>
    </ligand>
</feature>
<feature type="binding site" evidence="12 36 37">
    <location>
        <position position="500"/>
    </location>
    <ligand>
        <name>FAD</name>
        <dbReference type="ChEBI" id="CHEBI:57692"/>
    </ligand>
</feature>
<feature type="binding site" evidence="12 36 37">
    <location>
        <position position="503"/>
    </location>
    <ligand>
        <name>FAD</name>
        <dbReference type="ChEBI" id="CHEBI:57692"/>
    </ligand>
</feature>
<feature type="modified residue" description="Phosphoserine; by FAM20C" evidence="16">
    <location>
        <position position="426"/>
    </location>
</feature>
<feature type="glycosylation site" description="N-linked (GlcNAc...) (complex) asparagine" evidence="7 11 18">
    <location>
        <position position="130"/>
    </location>
</feature>
<feature type="glycosylation site" description="N-linked (GlcNAc...) asparagine" evidence="18">
    <location>
        <position position="243"/>
    </location>
</feature>
<feature type="glycosylation site" description="N-linked (GlcNAc...) asparagine" evidence="1">
    <location>
        <position position="575"/>
    </location>
</feature>
<feature type="disulfide bond" description="Redox-active" evidence="31 32 33 35 36 37">
    <location>
        <begin position="70"/>
        <end position="73"/>
    </location>
</feature>
<feature type="disulfide bond" evidence="13 15 38 39">
    <location>
        <begin position="101"/>
        <end position="110"/>
    </location>
</feature>
<feature type="disulfide bond" evidence="2 12 36 37">
    <location>
        <begin position="393"/>
        <end position="405"/>
    </location>
</feature>
<feature type="disulfide bond" evidence="2 12 36 37">
    <location>
        <begin position="449"/>
        <end position="452"/>
    </location>
</feature>
<feature type="disulfide bond" evidence="2 12 36 37">
    <location>
        <begin position="509"/>
        <end position="512"/>
    </location>
</feature>
<feature type="splice variant" id="VSP_020489" description="In isoform 2." evidence="24 25">
    <original>AS</original>
    <variation>LI</variation>
    <location>
        <begin position="603"/>
        <end position="604"/>
    </location>
</feature>
<feature type="splice variant" id="VSP_020490" description="In isoform 2." evidence="24 25">
    <location>
        <begin position="605"/>
        <end position="747"/>
    </location>
</feature>
<feature type="sequence variant" id="VAR_027429" description="In dbSNP:rs3894211.">
    <original>N</original>
    <variation>S</variation>
    <location>
        <position position="114"/>
    </location>
</feature>
<feature type="sequence variant" id="VAR_027430" description="In dbSNP:rs17855475." evidence="6 8 21">
    <original>G</original>
    <variation>A</variation>
    <location>
        <position position="200"/>
    </location>
</feature>
<feature type="sequence variant" id="VAR_027431" description="In dbSNP:rs4360492.">
    <original>R</original>
    <variation>M</variation>
    <location>
        <position position="256"/>
    </location>
</feature>
<feature type="sequence variant" id="VAR_027432" description="In dbSNP:rs2278943.">
    <original>A</original>
    <variation>S</variation>
    <location>
        <position position="294"/>
    </location>
</feature>
<feature type="sequence variant" id="VAR_027433" description="In dbSNP:rs12371." evidence="8">
    <original>H</original>
    <variation>R</variation>
    <location>
        <position position="444"/>
    </location>
</feature>
<feature type="sequence variant" id="VAR_027434" description="In dbSNP:rs3738115.">
    <original>N</original>
    <variation>H</variation>
    <location>
        <position position="591"/>
    </location>
</feature>
<feature type="sequence variant" id="VAR_053652" description="In dbSNP:rs16855466.">
    <original>R</original>
    <variation>P</variation>
    <location>
        <position position="605"/>
    </location>
</feature>
<feature type="mutagenesis site" description="Loss of catalytic activity. Cannot prevent cell detachment after depletion of the endogenous protein." evidence="14 19">
    <original>CGHC</original>
    <variation>AGHA</variation>
    <location>
        <begin position="70"/>
        <end position="73"/>
    </location>
</feature>
<feature type="mutagenesis site" description="Reduces activity by 93%." evidence="10">
    <original>C</original>
    <variation>S</variation>
    <location>
        <position position="70"/>
    </location>
</feature>
<feature type="mutagenesis site" description="Decreased protein stability and catalytic activity; when associated with S-119 or T-119." evidence="19">
    <original>H</original>
    <variation>A</variation>
    <location>
        <position position="72"/>
    </location>
</feature>
<feature type="mutagenesis site" description="Reduces activity by 93%." evidence="10">
    <original>C</original>
    <variation>S</variation>
    <location>
        <position position="73"/>
    </location>
</feature>
<feature type="mutagenesis site" description="Loss of catalytic activity. Decreased protein stability and catalytic activity; when associated with A-72." evidence="19">
    <original>P</original>
    <variation>S</variation>
    <variation>T</variation>
    <location>
        <position position="119"/>
    </location>
</feature>
<feature type="mutagenesis site" description="Loss of glycosylation site." evidence="18">
    <original>N</original>
    <variation>Q</variation>
    <location>
        <position position="130"/>
    </location>
</feature>
<feature type="mutagenesis site" description="Loss of glycosylation site. Abolishes secretion. No effect on catalytic activity." evidence="18">
    <original>N</original>
    <variation>Q</variation>
    <location>
        <position position="243"/>
    </location>
</feature>
<feature type="mutagenesis site" description="Decreased O-glycosylation." evidence="18">
    <original>TTVAPTT</original>
    <variation>ANVAPVA</variation>
    <location>
        <begin position="276"/>
        <end position="282"/>
    </location>
</feature>
<feature type="mutagenesis site" description="Reduces activity by 96%." evidence="10">
    <original>C</original>
    <variation>S</variation>
    <location>
        <position position="449"/>
    </location>
</feature>
<feature type="mutagenesis site" description="Loss of activity." evidence="10">
    <original>C</original>
    <variation>S</variation>
    <location>
        <position position="452"/>
    </location>
</feature>
<feature type="mutagenesis site" description="No effect. Reduces activity by 70%; when associated with S-512." evidence="10">
    <original>C</original>
    <variation>S</variation>
    <location>
        <position position="509"/>
    </location>
</feature>
<feature type="mutagenesis site" description="Reduces activity by 40%. Reduces activity by 70%; when associated with S-509." evidence="10">
    <original>C</original>
    <variation>S</variation>
    <location>
        <position position="512"/>
    </location>
</feature>
<feature type="strand" evidence="42">
    <location>
        <begin position="40"/>
        <end position="45"/>
    </location>
</feature>
<feature type="turn" evidence="42">
    <location>
        <begin position="47"/>
        <end position="49"/>
    </location>
</feature>
<feature type="helix" evidence="42">
    <location>
        <begin position="50"/>
        <end position="54"/>
    </location>
</feature>
<feature type="strand" evidence="42">
    <location>
        <begin position="58"/>
        <end position="66"/>
    </location>
</feature>
<feature type="helix" evidence="42">
    <location>
        <begin position="71"/>
        <end position="80"/>
    </location>
</feature>
<feature type="helix" evidence="42">
    <location>
        <begin position="83"/>
        <end position="86"/>
    </location>
</feature>
<feature type="helix" evidence="42">
    <location>
        <begin position="88"/>
        <end position="90"/>
    </location>
</feature>
<feature type="turn" evidence="42">
    <location>
        <begin position="91"/>
        <end position="93"/>
    </location>
</feature>
<feature type="strand" evidence="42">
    <location>
        <begin position="94"/>
        <end position="100"/>
    </location>
</feature>
<feature type="turn" evidence="42">
    <location>
        <begin position="104"/>
        <end position="106"/>
    </location>
</feature>
<feature type="helix" evidence="42">
    <location>
        <begin position="107"/>
        <end position="112"/>
    </location>
</feature>
<feature type="strand" evidence="42">
    <location>
        <begin position="117"/>
        <end position="124"/>
    </location>
</feature>
<feature type="strand" evidence="43">
    <location>
        <begin position="130"/>
        <end position="132"/>
    </location>
</feature>
<feature type="strand" evidence="43">
    <location>
        <begin position="134"/>
        <end position="136"/>
    </location>
</feature>
<feature type="helix" evidence="42">
    <location>
        <begin position="143"/>
        <end position="155"/>
    </location>
</feature>
<feature type="helix" evidence="42">
    <location>
        <begin position="174"/>
        <end position="177"/>
    </location>
</feature>
<feature type="helix" evidence="42">
    <location>
        <begin position="179"/>
        <end position="182"/>
    </location>
</feature>
<feature type="strand" evidence="42">
    <location>
        <begin position="186"/>
        <end position="193"/>
    </location>
</feature>
<feature type="helix" evidence="42">
    <location>
        <begin position="199"/>
        <end position="206"/>
    </location>
</feature>
<feature type="turn" evidence="42">
    <location>
        <begin position="207"/>
        <end position="209"/>
    </location>
</feature>
<feature type="strand" evidence="42">
    <location>
        <begin position="213"/>
        <end position="219"/>
    </location>
</feature>
<feature type="helix" evidence="42">
    <location>
        <begin position="223"/>
        <end position="229"/>
    </location>
</feature>
<feature type="strand" evidence="42">
    <location>
        <begin position="234"/>
        <end position="241"/>
    </location>
</feature>
<feature type="strand" evidence="42">
    <location>
        <begin position="246"/>
        <end position="248"/>
    </location>
</feature>
<feature type="strand" evidence="42">
    <location>
        <begin position="252"/>
        <end position="255"/>
    </location>
</feature>
<feature type="helix" evidence="42">
    <location>
        <begin position="256"/>
        <end position="264"/>
    </location>
</feature>
<feature type="strand" evidence="41">
    <location>
        <begin position="298"/>
        <end position="300"/>
    </location>
</feature>
<feature type="helix" evidence="41">
    <location>
        <begin position="301"/>
        <end position="313"/>
    </location>
</feature>
<feature type="helix" evidence="41">
    <location>
        <begin position="316"/>
        <end position="318"/>
    </location>
</feature>
<feature type="strand" evidence="41">
    <location>
        <begin position="320"/>
        <end position="323"/>
    </location>
</feature>
<feature type="helix" evidence="41">
    <location>
        <begin position="324"/>
        <end position="340"/>
    </location>
</feature>
<feature type="helix" evidence="41">
    <location>
        <begin position="345"/>
        <end position="360"/>
    </location>
</feature>
<feature type="strand" evidence="41">
    <location>
        <begin position="363"/>
        <end position="367"/>
    </location>
</feature>
<feature type="helix" evidence="41">
    <location>
        <begin position="368"/>
        <end position="377"/>
    </location>
</feature>
<feature type="helix" evidence="41">
    <location>
        <begin position="380"/>
        <end position="383"/>
    </location>
</feature>
<feature type="strand" evidence="41">
    <location>
        <begin position="400"/>
        <end position="402"/>
    </location>
</feature>
<feature type="helix" evidence="41">
    <location>
        <begin position="403"/>
        <end position="419"/>
    </location>
</feature>
<feature type="helix" evidence="40">
    <location>
        <begin position="426"/>
        <end position="431"/>
    </location>
</feature>
<feature type="helix" evidence="41">
    <location>
        <begin position="432"/>
        <end position="434"/>
    </location>
</feature>
<feature type="helix" evidence="41">
    <location>
        <begin position="435"/>
        <end position="446"/>
    </location>
</feature>
<feature type="helix" evidence="41">
    <location>
        <begin position="450"/>
        <end position="463"/>
    </location>
</feature>
<feature type="helix" evidence="41">
    <location>
        <begin position="464"/>
        <end position="466"/>
    </location>
</feature>
<feature type="helix" evidence="41">
    <location>
        <begin position="470"/>
        <end position="488"/>
    </location>
</feature>
<feature type="strand" evidence="41">
    <location>
        <begin position="502"/>
        <end position="504"/>
    </location>
</feature>
<feature type="turn" evidence="41">
    <location>
        <begin position="506"/>
        <end position="508"/>
    </location>
</feature>
<feature type="helix" evidence="40">
    <location>
        <begin position="510"/>
        <end position="512"/>
    </location>
</feature>
<feature type="strand" evidence="41">
    <location>
        <begin position="517"/>
        <end position="519"/>
    </location>
</feature>
<feature type="helix" evidence="41">
    <location>
        <begin position="524"/>
        <end position="534"/>
    </location>
</feature>
<feature type="helix" evidence="41">
    <location>
        <begin position="537"/>
        <end position="539"/>
    </location>
</feature>
<comment type="function">
    <text evidence="9 10 13 14 15 19">Catalyzes the oxidation of sulfhydryl groups in peptide and protein thiols to disulfides with the reduction of oxygen to hydrogen peroxide (PubMed:17331072, PubMed:18393449, PubMed:23704371, PubMed:23867277, PubMed:30367560). Plays a role in disulfide bond formation in a variety of extracellular proteins (PubMed:17331072, PubMed:22801504, PubMed:23867277, PubMed:30367560). In fibroblasts, required for normal incorporation of laminin into the extracellular matrix, and thereby for normal cell-cell adhesion and cell migration (PubMed:23704371, PubMed:23867277, PubMed:30367560).</text>
</comment>
<comment type="catalytic activity">
    <reaction evidence="10 13 14 15 17 18 19">
        <text>2 R'C(R)SH + O2 = R'C(R)S-S(R)CR' + H2O2</text>
        <dbReference type="Rhea" id="RHEA:17357"/>
        <dbReference type="ChEBI" id="CHEBI:15379"/>
        <dbReference type="ChEBI" id="CHEBI:16240"/>
        <dbReference type="ChEBI" id="CHEBI:16520"/>
        <dbReference type="ChEBI" id="CHEBI:17412"/>
        <dbReference type="EC" id="1.8.3.2"/>
    </reaction>
</comment>
<comment type="cofactor">
    <cofactor evidence="10 12">
        <name>FAD</name>
        <dbReference type="ChEBI" id="CHEBI:57692"/>
    </cofactor>
    <text evidence="10 12">Binds 1 FAD per subunit.</text>
</comment>
<comment type="subunit">
    <text evidence="10 12">Monomer.</text>
</comment>
<comment type="subcellular location">
    <molecule>Isoform 1</molecule>
    <subcellularLocation>
        <location evidence="9 14">Golgi apparatus membrane</location>
        <topology evidence="30">Single-pass membrane protein</topology>
    </subcellularLocation>
    <subcellularLocation>
        <location evidence="18">Secreted</location>
    </subcellularLocation>
    <text evidence="34">A small proportion is secreted, probably via a proteolytic cleavage that removes the membrane anchor.</text>
</comment>
<comment type="subcellular location">
    <molecule>Isoform 2</molecule>
    <subcellularLocation>
        <location evidence="5">Secreted</location>
    </subcellularLocation>
    <text evidence="5">Found in the extracellular medium of quiescent cells but is not found in proliferating cells.</text>
</comment>
<comment type="alternative products">
    <event type="alternative splicing"/>
    <isoform>
        <id>O00391-1</id>
        <name>1</name>
        <name evidence="26">a</name>
        <name evidence="27">QSOX-L</name>
        <sequence type="displayed"/>
    </isoform>
    <isoform>
        <id>O00391-2</id>
        <name>2</name>
        <name>b</name>
        <name evidence="27">QSOX-S</name>
        <sequence type="described" ref="VSP_020489 VSP_020490"/>
    </isoform>
</comment>
<comment type="tissue specificity">
    <text evidence="5 22">Expressed in heart, placenta, lung, liver, skeletal muscle, pancreas and very weakly in brain and kidney.</text>
</comment>
<comment type="induction">
    <text evidence="5 20">Induced in quiescent cells just as fibroblasts begin to leave the proliferative cycle and enter quiescence.</text>
</comment>
<comment type="PTM">
    <text evidence="9 18">N-glycosylated (PubMed:17331072, PubMed:29757379). O-glycosylated on Thr and Ser residues (PubMed:29757379).</text>
</comment>
<comment type="miscellaneous">
    <text evidence="29">'Quiescin Q6' means that it was the sixth clone to be found at a higher level of expression in quiescent fibroblasts.</text>
</comment>
<comment type="similarity">
    <text evidence="29">Belongs to the quiescin-sulfhydryl oxidase (QSOX) family.</text>
</comment>
<comment type="sequence caution" evidence="29">
    <conflict type="erroneous initiation">
        <sequence resource="EMBL-CDS" id="BAD92517"/>
    </conflict>
    <text>Extended N-terminus.</text>
</comment>
<gene>
    <name type="primary">QSOX1</name>
    <name evidence="28" type="synonym">QSCN6</name>
    <name type="ORF">UNQ2520/PRO6013</name>
</gene>
<organism>
    <name type="scientific">Homo sapiens</name>
    <name type="common">Human</name>
    <dbReference type="NCBI Taxonomy" id="9606"/>
    <lineage>
        <taxon>Eukaryota</taxon>
        <taxon>Metazoa</taxon>
        <taxon>Chordata</taxon>
        <taxon>Craniata</taxon>
        <taxon>Vertebrata</taxon>
        <taxon>Euteleostomi</taxon>
        <taxon>Mammalia</taxon>
        <taxon>Eutheria</taxon>
        <taxon>Euarchontoglires</taxon>
        <taxon>Primates</taxon>
        <taxon>Haplorrhini</taxon>
        <taxon>Catarrhini</taxon>
        <taxon>Hominidae</taxon>
        <taxon>Homo</taxon>
    </lineage>
</organism>
<protein>
    <recommendedName>
        <fullName>Sulfhydryl oxidase 1</fullName>
        <shortName>hQSOX</shortName>
        <ecNumber evidence="10 13 14 15 17 18 19">1.8.3.2</ecNumber>
    </recommendedName>
    <alternativeName>
        <fullName evidence="23 28">Quiescin Q6</fullName>
    </alternativeName>
</protein>
<proteinExistence type="evidence at protein level"/>
<name>QSOX1_HUMAN</name>
<evidence type="ECO:0000255" key="1"/>
<evidence type="ECO:0000255" key="2">
    <source>
        <dbReference type="PROSITE-ProRule" id="PRU00654"/>
    </source>
</evidence>
<evidence type="ECO:0000255" key="3">
    <source>
        <dbReference type="PROSITE-ProRule" id="PRU00691"/>
    </source>
</evidence>
<evidence type="ECO:0000256" key="4">
    <source>
        <dbReference type="SAM" id="MobiDB-lite"/>
    </source>
</evidence>
<evidence type="ECO:0000269" key="5">
    <source>
    </source>
</evidence>
<evidence type="ECO:0000269" key="6">
    <source>
    </source>
</evidence>
<evidence type="ECO:0000269" key="7">
    <source>
    </source>
</evidence>
<evidence type="ECO:0000269" key="8">
    <source>
    </source>
</evidence>
<evidence type="ECO:0000269" key="9">
    <source>
    </source>
</evidence>
<evidence type="ECO:0000269" key="10">
    <source>
    </source>
</evidence>
<evidence type="ECO:0000269" key="11">
    <source>
    </source>
</evidence>
<evidence type="ECO:0000269" key="12">
    <source>
    </source>
</evidence>
<evidence type="ECO:0000269" key="13">
    <source>
    </source>
</evidence>
<evidence type="ECO:0000269" key="14">
    <source>
    </source>
</evidence>
<evidence type="ECO:0000269" key="15">
    <source>
    </source>
</evidence>
<evidence type="ECO:0000269" key="16">
    <source>
    </source>
</evidence>
<evidence type="ECO:0000269" key="17">
    <source>
    </source>
</evidence>
<evidence type="ECO:0000269" key="18">
    <source>
    </source>
</evidence>
<evidence type="ECO:0000269" key="19">
    <source>
    </source>
</evidence>
<evidence type="ECO:0000269" key="20">
    <source>
    </source>
</evidence>
<evidence type="ECO:0000269" key="21">
    <source ref="4"/>
</evidence>
<evidence type="ECO:0000269" key="22">
    <source ref="8"/>
</evidence>
<evidence type="ECO:0000303" key="23">
    <source>
    </source>
</evidence>
<evidence type="ECO:0000303" key="24">
    <source>
    </source>
</evidence>
<evidence type="ECO:0000303" key="25">
    <source>
    </source>
</evidence>
<evidence type="ECO:0000303" key="26">
    <source>
    </source>
</evidence>
<evidence type="ECO:0000303" key="27">
    <source>
    </source>
</evidence>
<evidence type="ECO:0000303" key="28">
    <source>
    </source>
</evidence>
<evidence type="ECO:0000305" key="29"/>
<evidence type="ECO:0000305" key="30">
    <source>
    </source>
</evidence>
<evidence type="ECO:0000305" key="31">
    <source>
    </source>
</evidence>
<evidence type="ECO:0000305" key="32">
    <source>
    </source>
</evidence>
<evidence type="ECO:0000305" key="33">
    <source>
    </source>
</evidence>
<evidence type="ECO:0000305" key="34">
    <source>
    </source>
</evidence>
<evidence type="ECO:0000305" key="35">
    <source>
    </source>
</evidence>
<evidence type="ECO:0007744" key="36">
    <source>
        <dbReference type="PDB" id="3LLI"/>
    </source>
</evidence>
<evidence type="ECO:0007744" key="37">
    <source>
        <dbReference type="PDB" id="3LLK"/>
    </source>
</evidence>
<evidence type="ECO:0007744" key="38">
    <source>
        <dbReference type="PDB" id="3Q6O"/>
    </source>
</evidence>
<evidence type="ECO:0007744" key="39">
    <source>
        <dbReference type="PDB" id="4IJ3"/>
    </source>
</evidence>
<evidence type="ECO:0007829" key="40">
    <source>
        <dbReference type="PDB" id="3LLI"/>
    </source>
</evidence>
<evidence type="ECO:0007829" key="41">
    <source>
        <dbReference type="PDB" id="3LLK"/>
    </source>
</evidence>
<evidence type="ECO:0007829" key="42">
    <source>
        <dbReference type="PDB" id="3Q6O"/>
    </source>
</evidence>
<evidence type="ECO:0007829" key="43">
    <source>
        <dbReference type="PDB" id="4IJ3"/>
    </source>
</evidence>
<dbReference type="EC" id="1.8.3.2" evidence="10 13 14 15 17 18 19"/>
<dbReference type="EMBL" id="U97276">
    <property type="protein sequence ID" value="AAC09010.2"/>
    <property type="molecule type" value="mRNA"/>
</dbReference>
<dbReference type="EMBL" id="AF361868">
    <property type="protein sequence ID" value="AAM00263.1"/>
    <property type="molecule type" value="mRNA"/>
</dbReference>
<dbReference type="EMBL" id="AY358941">
    <property type="protein sequence ID" value="AAQ89300.1"/>
    <property type="molecule type" value="mRNA"/>
</dbReference>
<dbReference type="EMBL" id="AB209280">
    <property type="protein sequence ID" value="BAD92517.1"/>
    <property type="status" value="ALT_INIT"/>
    <property type="molecule type" value="mRNA"/>
</dbReference>
<dbReference type="EMBL" id="AL390718">
    <property type="status" value="NOT_ANNOTATED_CDS"/>
    <property type="molecule type" value="Genomic_DNA"/>
</dbReference>
<dbReference type="EMBL" id="BC017692">
    <property type="protein sequence ID" value="AAH17692.1"/>
    <property type="molecule type" value="mRNA"/>
</dbReference>
<dbReference type="EMBL" id="BC100023">
    <property type="protein sequence ID" value="AAI00024.1"/>
    <property type="molecule type" value="mRNA"/>
</dbReference>
<dbReference type="CCDS" id="CCDS1337.1">
    <molecule id="O00391-1"/>
</dbReference>
<dbReference type="CCDS" id="CCDS30950.1">
    <molecule id="O00391-2"/>
</dbReference>
<dbReference type="RefSeq" id="NP_001004128.1">
    <molecule id="O00391-2"/>
    <property type="nucleotide sequence ID" value="NM_001004128.3"/>
</dbReference>
<dbReference type="RefSeq" id="NP_002817.2">
    <molecule id="O00391-1"/>
    <property type="nucleotide sequence ID" value="NM_002826.4"/>
</dbReference>
<dbReference type="PDB" id="3LLI">
    <property type="method" value="X-ray"/>
    <property type="resolution" value="2.05 A"/>
    <property type="chains" value="A=286-546"/>
</dbReference>
<dbReference type="PDB" id="3LLK">
    <property type="method" value="X-ray"/>
    <property type="resolution" value="2.00 A"/>
    <property type="chains" value="A/B/C=286-546"/>
</dbReference>
<dbReference type="PDB" id="3Q6O">
    <property type="method" value="X-ray"/>
    <property type="resolution" value="2.05 A"/>
    <property type="chains" value="A=33-272"/>
</dbReference>
<dbReference type="PDB" id="4IJ3">
    <property type="method" value="X-ray"/>
    <property type="resolution" value="2.70 A"/>
    <property type="chains" value="A=33-272"/>
</dbReference>
<dbReference type="PDBsum" id="3LLI"/>
<dbReference type="PDBsum" id="3LLK"/>
<dbReference type="PDBsum" id="3Q6O"/>
<dbReference type="PDBsum" id="4IJ3"/>
<dbReference type="SMR" id="O00391"/>
<dbReference type="BioGRID" id="111734">
    <property type="interactions" value="93"/>
</dbReference>
<dbReference type="FunCoup" id="O00391">
    <property type="interactions" value="211"/>
</dbReference>
<dbReference type="IntAct" id="O00391">
    <property type="interactions" value="61"/>
</dbReference>
<dbReference type="MINT" id="O00391"/>
<dbReference type="STRING" id="9606.ENSP00000356574"/>
<dbReference type="BindingDB" id="O00391"/>
<dbReference type="ChEMBL" id="CHEMBL4523117"/>
<dbReference type="GlyConnect" id="1774">
    <property type="glycosylation" value="24 N-Linked glycans (4 sites)"/>
</dbReference>
<dbReference type="GlyCosmos" id="O00391">
    <property type="glycosylation" value="6 sites, 32 glycans"/>
</dbReference>
<dbReference type="GlyGen" id="O00391">
    <property type="glycosylation" value="22 sites, 35 N-linked glycans (4 sites), 4 O-linked glycans (18 sites)"/>
</dbReference>
<dbReference type="iPTMnet" id="O00391"/>
<dbReference type="PhosphoSitePlus" id="O00391"/>
<dbReference type="SwissPalm" id="O00391"/>
<dbReference type="BioMuta" id="QSOX1"/>
<dbReference type="jPOST" id="O00391"/>
<dbReference type="MassIVE" id="O00391"/>
<dbReference type="PaxDb" id="9606-ENSP00000356574"/>
<dbReference type="PeptideAtlas" id="O00391"/>
<dbReference type="PRIDE" id="O00391"/>
<dbReference type="ProteomicsDB" id="47862">
    <molecule id="O00391-1"/>
</dbReference>
<dbReference type="ProteomicsDB" id="47863">
    <molecule id="O00391-2"/>
</dbReference>
<dbReference type="Pumba" id="O00391"/>
<dbReference type="ABCD" id="O00391">
    <property type="antibodies" value="2 sequenced antibodies"/>
</dbReference>
<dbReference type="Antibodypedia" id="47086">
    <property type="antibodies" value="212 antibodies from 34 providers"/>
</dbReference>
<dbReference type="DNASU" id="5768"/>
<dbReference type="Ensembl" id="ENST00000367600.5">
    <molecule id="O00391-2"/>
    <property type="protein sequence ID" value="ENSP00000356572.5"/>
    <property type="gene ID" value="ENSG00000116260.17"/>
</dbReference>
<dbReference type="Ensembl" id="ENST00000367602.8">
    <molecule id="O00391-1"/>
    <property type="protein sequence ID" value="ENSP00000356574.3"/>
    <property type="gene ID" value="ENSG00000116260.17"/>
</dbReference>
<dbReference type="GeneID" id="5768"/>
<dbReference type="KEGG" id="hsa:5768"/>
<dbReference type="MANE-Select" id="ENST00000367602.8">
    <property type="protein sequence ID" value="ENSP00000356574.3"/>
    <property type="RefSeq nucleotide sequence ID" value="NM_002826.5"/>
    <property type="RefSeq protein sequence ID" value="NP_002817.2"/>
</dbReference>
<dbReference type="UCSC" id="uc001gny.4">
    <molecule id="O00391-1"/>
    <property type="organism name" value="human"/>
</dbReference>
<dbReference type="AGR" id="HGNC:9756"/>
<dbReference type="CTD" id="5768"/>
<dbReference type="DisGeNET" id="5768"/>
<dbReference type="GeneCards" id="QSOX1"/>
<dbReference type="HGNC" id="HGNC:9756">
    <property type="gene designation" value="QSOX1"/>
</dbReference>
<dbReference type="HPA" id="ENSG00000116260">
    <property type="expression patterns" value="Low tissue specificity"/>
</dbReference>
<dbReference type="MIM" id="603120">
    <property type="type" value="gene"/>
</dbReference>
<dbReference type="neXtProt" id="NX_O00391"/>
<dbReference type="OpenTargets" id="ENSG00000116260"/>
<dbReference type="PharmGKB" id="PA162400559"/>
<dbReference type="VEuPathDB" id="HostDB:ENSG00000116260"/>
<dbReference type="eggNOG" id="KOG1731">
    <property type="taxonomic scope" value="Eukaryota"/>
</dbReference>
<dbReference type="GeneTree" id="ENSGT00940000159504"/>
<dbReference type="HOGENOM" id="CLU_020182_1_0_1"/>
<dbReference type="InParanoid" id="O00391"/>
<dbReference type="OMA" id="YGELWNE"/>
<dbReference type="OrthoDB" id="59470at2759"/>
<dbReference type="PAN-GO" id="O00391">
    <property type="GO annotations" value="5 GO annotations based on evolutionary models"/>
</dbReference>
<dbReference type="PhylomeDB" id="O00391"/>
<dbReference type="TreeFam" id="TF316749"/>
<dbReference type="BRENDA" id="1.8.3.2">
    <property type="organism ID" value="2681"/>
</dbReference>
<dbReference type="PathwayCommons" id="O00391"/>
<dbReference type="Reactome" id="R-HSA-114608">
    <property type="pathway name" value="Platelet degranulation"/>
</dbReference>
<dbReference type="Reactome" id="R-HSA-381426">
    <property type="pathway name" value="Regulation of Insulin-like Growth Factor (IGF) transport and uptake by Insulin-like Growth Factor Binding Proteins (IGFBPs)"/>
</dbReference>
<dbReference type="Reactome" id="R-HSA-6798695">
    <property type="pathway name" value="Neutrophil degranulation"/>
</dbReference>
<dbReference type="Reactome" id="R-HSA-8957275">
    <property type="pathway name" value="Post-translational protein phosphorylation"/>
</dbReference>
<dbReference type="SignaLink" id="O00391"/>
<dbReference type="BioGRID-ORCS" id="5768">
    <property type="hits" value="19 hits in 1154 CRISPR screens"/>
</dbReference>
<dbReference type="ChiTaRS" id="QSOX1">
    <property type="organism name" value="human"/>
</dbReference>
<dbReference type="EvolutionaryTrace" id="O00391"/>
<dbReference type="GeneWiki" id="QSOX1"/>
<dbReference type="GenomeRNAi" id="5768"/>
<dbReference type="Pharos" id="O00391">
    <property type="development level" value="Tbio"/>
</dbReference>
<dbReference type="PRO" id="PR:O00391"/>
<dbReference type="Proteomes" id="UP000005640">
    <property type="component" value="Chromosome 1"/>
</dbReference>
<dbReference type="RNAct" id="O00391">
    <property type="molecule type" value="protein"/>
</dbReference>
<dbReference type="Bgee" id="ENSG00000116260">
    <property type="expression patterns" value="Expressed in stromal cell of endometrium and 200 other cell types or tissues"/>
</dbReference>
<dbReference type="ExpressionAtlas" id="O00391">
    <property type="expression patterns" value="baseline and differential"/>
</dbReference>
<dbReference type="GO" id="GO:0005788">
    <property type="term" value="C:endoplasmic reticulum lumen"/>
    <property type="evidence" value="ECO:0000304"/>
    <property type="project" value="Reactome"/>
</dbReference>
<dbReference type="GO" id="GO:0070062">
    <property type="term" value="C:extracellular exosome"/>
    <property type="evidence" value="ECO:0000314"/>
    <property type="project" value="UniProtKB"/>
</dbReference>
<dbReference type="GO" id="GO:0005576">
    <property type="term" value="C:extracellular region"/>
    <property type="evidence" value="ECO:0000304"/>
    <property type="project" value="Reactome"/>
</dbReference>
<dbReference type="GO" id="GO:0005615">
    <property type="term" value="C:extracellular space"/>
    <property type="evidence" value="ECO:0000314"/>
    <property type="project" value="UniProtKB"/>
</dbReference>
<dbReference type="GO" id="GO:0005794">
    <property type="term" value="C:Golgi apparatus"/>
    <property type="evidence" value="ECO:0000314"/>
    <property type="project" value="HPA"/>
</dbReference>
<dbReference type="GO" id="GO:0000139">
    <property type="term" value="C:Golgi membrane"/>
    <property type="evidence" value="ECO:0000314"/>
    <property type="project" value="UniProtKB"/>
</dbReference>
<dbReference type="GO" id="GO:0043231">
    <property type="term" value="C:intracellular membrane-bounded organelle"/>
    <property type="evidence" value="ECO:0000314"/>
    <property type="project" value="HPA"/>
</dbReference>
<dbReference type="GO" id="GO:0031093">
    <property type="term" value="C:platelet alpha granule lumen"/>
    <property type="evidence" value="ECO:0000304"/>
    <property type="project" value="Reactome"/>
</dbReference>
<dbReference type="GO" id="GO:0035580">
    <property type="term" value="C:specific granule lumen"/>
    <property type="evidence" value="ECO:0000304"/>
    <property type="project" value="Reactome"/>
</dbReference>
<dbReference type="GO" id="GO:1904724">
    <property type="term" value="C:tertiary granule lumen"/>
    <property type="evidence" value="ECO:0000304"/>
    <property type="project" value="Reactome"/>
</dbReference>
<dbReference type="GO" id="GO:0071949">
    <property type="term" value="F:FAD binding"/>
    <property type="evidence" value="ECO:0000314"/>
    <property type="project" value="UniProtKB"/>
</dbReference>
<dbReference type="GO" id="GO:0016971">
    <property type="term" value="F:flavin-dependent sulfhydryl oxidase activity"/>
    <property type="evidence" value="ECO:0000314"/>
    <property type="project" value="UniProtKB"/>
</dbReference>
<dbReference type="GO" id="GO:0003756">
    <property type="term" value="F:protein disulfide isomerase activity"/>
    <property type="evidence" value="ECO:0000314"/>
    <property type="project" value="UniProtKB"/>
</dbReference>
<dbReference type="GO" id="GO:0085029">
    <property type="term" value="P:extracellular matrix assembly"/>
    <property type="evidence" value="ECO:0000315"/>
    <property type="project" value="UniProtKB"/>
</dbReference>
<dbReference type="GO" id="GO:0016242">
    <property type="term" value="P:negative regulation of macroautophagy"/>
    <property type="evidence" value="ECO:0000315"/>
    <property type="project" value="CACAO"/>
</dbReference>
<dbReference type="GO" id="GO:0006457">
    <property type="term" value="P:protein folding"/>
    <property type="evidence" value="ECO:0000318"/>
    <property type="project" value="GO_Central"/>
</dbReference>
<dbReference type="CDD" id="cd02992">
    <property type="entry name" value="PDI_a_QSOX"/>
    <property type="match status" value="1"/>
</dbReference>
<dbReference type="FunFam" id="1.20.120.1960:FF:000001">
    <property type="entry name" value="Sulfhydryl oxidase"/>
    <property type="match status" value="1"/>
</dbReference>
<dbReference type="FunFam" id="1.20.120.310:FF:000001">
    <property type="entry name" value="Sulfhydryl oxidase"/>
    <property type="match status" value="1"/>
</dbReference>
<dbReference type="FunFam" id="3.40.30.10:FF:000073">
    <property type="entry name" value="Sulfhydryl oxidase"/>
    <property type="match status" value="1"/>
</dbReference>
<dbReference type="FunFam" id="3.40.30.10:FF:000080">
    <property type="entry name" value="Sulfhydryl oxidase"/>
    <property type="match status" value="1"/>
</dbReference>
<dbReference type="Gene3D" id="1.20.120.310">
    <property type="entry name" value="ERV/ALR sulfhydryl oxidase domain"/>
    <property type="match status" value="1"/>
</dbReference>
<dbReference type="Gene3D" id="3.40.30.10">
    <property type="entry name" value="Glutaredoxin"/>
    <property type="match status" value="2"/>
</dbReference>
<dbReference type="Gene3D" id="1.20.120.1960">
    <property type="entry name" value="QSOX sulfhydryl oxidase domain"/>
    <property type="match status" value="1"/>
</dbReference>
<dbReference type="InterPro" id="IPR036774">
    <property type="entry name" value="ERV/ALR_sulphydryl_oxid_sf"/>
</dbReference>
<dbReference type="InterPro" id="IPR017905">
    <property type="entry name" value="ERV/ALR_sulphydryl_oxidase"/>
</dbReference>
<dbReference type="InterPro" id="IPR040986">
    <property type="entry name" value="QSOX_FAD-bd_dom"/>
</dbReference>
<dbReference type="InterPro" id="IPR042568">
    <property type="entry name" value="QSOX_FAD-bd_sf"/>
</dbReference>
<dbReference type="InterPro" id="IPR041269">
    <property type="entry name" value="QSOX_Trx1"/>
</dbReference>
<dbReference type="InterPro" id="IPR039798">
    <property type="entry name" value="Sulfhydryl_oxidase"/>
</dbReference>
<dbReference type="InterPro" id="IPR036249">
    <property type="entry name" value="Thioredoxin-like_sf"/>
</dbReference>
<dbReference type="InterPro" id="IPR013766">
    <property type="entry name" value="Thioredoxin_domain"/>
</dbReference>
<dbReference type="PANTHER" id="PTHR22897">
    <property type="entry name" value="QUIESCIN Q6-RELATED SULFHYDRYL OXIDASE"/>
    <property type="match status" value="1"/>
</dbReference>
<dbReference type="PANTHER" id="PTHR22897:SF6">
    <property type="entry name" value="SULFHYDRYL OXIDASE 1"/>
    <property type="match status" value="1"/>
</dbReference>
<dbReference type="Pfam" id="PF04777">
    <property type="entry name" value="Evr1_Alr"/>
    <property type="match status" value="1"/>
</dbReference>
<dbReference type="Pfam" id="PF18371">
    <property type="entry name" value="FAD_SOX"/>
    <property type="match status" value="1"/>
</dbReference>
<dbReference type="Pfam" id="PF18108">
    <property type="entry name" value="QSOX_Trx1"/>
    <property type="match status" value="1"/>
</dbReference>
<dbReference type="Pfam" id="PF00085">
    <property type="entry name" value="Thioredoxin"/>
    <property type="match status" value="1"/>
</dbReference>
<dbReference type="SUPFAM" id="SSF69000">
    <property type="entry name" value="FAD-dependent thiol oxidase"/>
    <property type="match status" value="1"/>
</dbReference>
<dbReference type="SUPFAM" id="SSF52833">
    <property type="entry name" value="Thioredoxin-like"/>
    <property type="match status" value="1"/>
</dbReference>
<dbReference type="PROSITE" id="PS51324">
    <property type="entry name" value="ERV_ALR"/>
    <property type="match status" value="1"/>
</dbReference>
<dbReference type="PROSITE" id="PS51352">
    <property type="entry name" value="THIOREDOXIN_2"/>
    <property type="match status" value="1"/>
</dbReference>
<keyword id="KW-0002">3D-structure</keyword>
<keyword id="KW-0025">Alternative splicing</keyword>
<keyword id="KW-1015">Disulfide bond</keyword>
<keyword id="KW-0274">FAD</keyword>
<keyword id="KW-0285">Flavoprotein</keyword>
<keyword id="KW-0325">Glycoprotein</keyword>
<keyword id="KW-0333">Golgi apparatus</keyword>
<keyword id="KW-0472">Membrane</keyword>
<keyword id="KW-0560">Oxidoreductase</keyword>
<keyword id="KW-0597">Phosphoprotein</keyword>
<keyword id="KW-1267">Proteomics identification</keyword>
<keyword id="KW-1185">Reference proteome</keyword>
<keyword id="KW-0964">Secreted</keyword>
<keyword id="KW-0732">Signal</keyword>
<keyword id="KW-0812">Transmembrane</keyword>
<keyword id="KW-1133">Transmembrane helix</keyword>
<sequence>MRRCNSGSGPPPSLLLLLLWLLAVPGANAAPRSALYSPSDPLTLLQADTVRGAVLGSRSAWAVEFFASWCGHCIAFAPTWKALAEDVKAWRPALYLAALDCAEETNSAVCRDFNIPGFPTVRFFKAFTKNGSGAVFPVAGADVQTLRERLIDALESHHDTWPPACPPLEPAKLEEIDGFFARNNEEYLALIFEKGGSYLGREVALDLSQHKGVAVRRVLNTEANVVRKFGVTDFPSCYLLFRNGSVSRVPVLMESRSFYTAYLQRLSGLTREAAQTTVAPTTANKIAPTVWKLADRSKIYMADLESALHYILRIEVGRFPVLEGQRLVALKKFVAVLAKYFPGRPLVQNFLHSVNEWLKRQKRNKIPYSFFKTALDDRKEGAVLAKKVNWIGCQGSEPHFRGFPCSLWVLFHFLTVQAARQNVDHSQEAAKAKEVLPAIRGYVHYFFGCRDCASHFEQMAAASMHRVGSPNAAVLWLWSSHNRVNARLAGAPSEDPQFPKVQWPPRELCSACHNERLDVPVWDVEATLNFLKAHFSPSNIILDFPAAGSAARRDVQNVAAAPELAMGALELESRNSTLDPGKPEMMKSPTNTTPHVPAEGPEASRPPKLHPGLRAAPGQEPPEHMAELQRNEQEQPLGQWHLSKRDTGAALLAESRAEKNRLWGPLEVRRVGRSSKQLVDIPEGQLEARAGRGRGQWLQVLGGGFSYLDISLCVGLYSLSFMGLLAMYTYFQAKIRALKGHAGHPAA</sequence>
<accession>O00391</accession>
<accession>Q59G29</accession>
<accession>Q5T2X0</accession>
<accession>Q8TDL6</accession>
<accession>Q8WVP4</accession>